<dbReference type="EC" id="2.7.9.3" evidence="1"/>
<dbReference type="EMBL" id="BX842653">
    <property type="protein sequence ID" value="CAE80367.1"/>
    <property type="molecule type" value="Genomic_DNA"/>
</dbReference>
<dbReference type="RefSeq" id="WP_011164970.1">
    <property type="nucleotide sequence ID" value="NC_005363.1"/>
</dbReference>
<dbReference type="SMR" id="Q6MK42"/>
<dbReference type="STRING" id="264462.Bd2571"/>
<dbReference type="GeneID" id="93013471"/>
<dbReference type="KEGG" id="bba:Bd2571"/>
<dbReference type="eggNOG" id="COG0709">
    <property type="taxonomic scope" value="Bacteria"/>
</dbReference>
<dbReference type="HOGENOM" id="CLU_032859_0_1_7"/>
<dbReference type="Proteomes" id="UP000008080">
    <property type="component" value="Chromosome"/>
</dbReference>
<dbReference type="GO" id="GO:0005737">
    <property type="term" value="C:cytoplasm"/>
    <property type="evidence" value="ECO:0007669"/>
    <property type="project" value="TreeGrafter"/>
</dbReference>
<dbReference type="GO" id="GO:0005524">
    <property type="term" value="F:ATP binding"/>
    <property type="evidence" value="ECO:0007669"/>
    <property type="project" value="UniProtKB-UniRule"/>
</dbReference>
<dbReference type="GO" id="GO:0000287">
    <property type="term" value="F:magnesium ion binding"/>
    <property type="evidence" value="ECO:0007669"/>
    <property type="project" value="UniProtKB-UniRule"/>
</dbReference>
<dbReference type="GO" id="GO:0004756">
    <property type="term" value="F:selenide, water dikinase activity"/>
    <property type="evidence" value="ECO:0007669"/>
    <property type="project" value="UniProtKB-UniRule"/>
</dbReference>
<dbReference type="GO" id="GO:0016260">
    <property type="term" value="P:selenocysteine biosynthetic process"/>
    <property type="evidence" value="ECO:0007669"/>
    <property type="project" value="InterPro"/>
</dbReference>
<dbReference type="CDD" id="cd02195">
    <property type="entry name" value="SelD"/>
    <property type="match status" value="1"/>
</dbReference>
<dbReference type="FunFam" id="3.30.1330.10:FF:000003">
    <property type="entry name" value="Selenide, water dikinase"/>
    <property type="match status" value="1"/>
</dbReference>
<dbReference type="Gene3D" id="3.90.650.10">
    <property type="entry name" value="PurM-like C-terminal domain"/>
    <property type="match status" value="1"/>
</dbReference>
<dbReference type="Gene3D" id="3.30.1330.10">
    <property type="entry name" value="PurM-like, N-terminal domain"/>
    <property type="match status" value="1"/>
</dbReference>
<dbReference type="HAMAP" id="MF_00625">
    <property type="entry name" value="SelD"/>
    <property type="match status" value="1"/>
</dbReference>
<dbReference type="InterPro" id="IPR010918">
    <property type="entry name" value="PurM-like_C_dom"/>
</dbReference>
<dbReference type="InterPro" id="IPR036676">
    <property type="entry name" value="PurM-like_C_sf"/>
</dbReference>
<dbReference type="InterPro" id="IPR016188">
    <property type="entry name" value="PurM-like_N"/>
</dbReference>
<dbReference type="InterPro" id="IPR036921">
    <property type="entry name" value="PurM-like_N_sf"/>
</dbReference>
<dbReference type="InterPro" id="IPR023061">
    <property type="entry name" value="SelD_I"/>
</dbReference>
<dbReference type="InterPro" id="IPR004536">
    <property type="entry name" value="SPS/SelD"/>
</dbReference>
<dbReference type="NCBIfam" id="NF002098">
    <property type="entry name" value="PRK00943.1"/>
    <property type="match status" value="1"/>
</dbReference>
<dbReference type="NCBIfam" id="TIGR00476">
    <property type="entry name" value="selD"/>
    <property type="match status" value="1"/>
</dbReference>
<dbReference type="PANTHER" id="PTHR10256:SF0">
    <property type="entry name" value="INACTIVE SELENIDE, WATER DIKINASE-LIKE PROTEIN-RELATED"/>
    <property type="match status" value="1"/>
</dbReference>
<dbReference type="PANTHER" id="PTHR10256">
    <property type="entry name" value="SELENIDE, WATER DIKINASE"/>
    <property type="match status" value="1"/>
</dbReference>
<dbReference type="Pfam" id="PF00586">
    <property type="entry name" value="AIRS"/>
    <property type="match status" value="1"/>
</dbReference>
<dbReference type="Pfam" id="PF02769">
    <property type="entry name" value="AIRS_C"/>
    <property type="match status" value="1"/>
</dbReference>
<dbReference type="PIRSF" id="PIRSF036407">
    <property type="entry name" value="Selenphspht_syn"/>
    <property type="match status" value="1"/>
</dbReference>
<dbReference type="SUPFAM" id="SSF56042">
    <property type="entry name" value="PurM C-terminal domain-like"/>
    <property type="match status" value="1"/>
</dbReference>
<dbReference type="SUPFAM" id="SSF55326">
    <property type="entry name" value="PurM N-terminal domain-like"/>
    <property type="match status" value="1"/>
</dbReference>
<accession>Q6MK42</accession>
<gene>
    <name evidence="1" type="primary">selD</name>
    <name type="ordered locus">Bd2571</name>
</gene>
<sequence length="350" mass="37261">MTSTKISLTQTVQKGGCAAKVAASELREILKQVKFPAAHPALMVDGGLFDDAAIYKINDEIALVQTLDFFTPIVDTPKLFGEIAAANALSDVYAMGGKPKTAMGILAFPLATLPKEVIVDVMQGASDKIAEADANFVGGHSIDDDTLKFGLSVTGFVNPQQVWTNAGAKVGDHLILTKPLGTGTLTAGLKRQEVQEADIMEALQSMATVNNAVDYMTPVLKNEVHAATDITGFGLSGHGMQLANASQVSLRISFSKIPRFAKALAFLEKGFLTKAHRSNAEYTKEAISVAGLESLQQHLLHDPQTSGGLLLSVSREVSADMVQALRAKFKSAEIIGEVLPRQDKAVIFEP</sequence>
<feature type="chain" id="PRO_0000127615" description="Selenide, water dikinase">
    <location>
        <begin position="1"/>
        <end position="350"/>
    </location>
</feature>
<feature type="active site" evidence="1">
    <location>
        <position position="17"/>
    </location>
</feature>
<feature type="binding site" description="in other chain" evidence="1">
    <location>
        <position position="20"/>
    </location>
    <ligand>
        <name>ATP</name>
        <dbReference type="ChEBI" id="CHEBI:30616"/>
        <note>ligand shared between dimeric partners</note>
    </ligand>
</feature>
<feature type="binding site" description="in other chain" evidence="1">
    <location>
        <begin position="48"/>
        <end position="50"/>
    </location>
    <ligand>
        <name>ATP</name>
        <dbReference type="ChEBI" id="CHEBI:30616"/>
        <note>ligand shared between dimeric partners</note>
    </ligand>
</feature>
<feature type="binding site" evidence="1">
    <location>
        <position position="51"/>
    </location>
    <ligand>
        <name>Mg(2+)</name>
        <dbReference type="ChEBI" id="CHEBI:18420"/>
    </ligand>
</feature>
<feature type="binding site" description="in other chain" evidence="1">
    <location>
        <position position="68"/>
    </location>
    <ligand>
        <name>ATP</name>
        <dbReference type="ChEBI" id="CHEBI:30616"/>
        <note>ligand shared between dimeric partners</note>
    </ligand>
</feature>
<feature type="binding site" description="in other chain" evidence="1">
    <location>
        <position position="91"/>
    </location>
    <ligand>
        <name>ATP</name>
        <dbReference type="ChEBI" id="CHEBI:30616"/>
        <note>ligand shared between dimeric partners</note>
    </ligand>
</feature>
<feature type="binding site" evidence="1">
    <location>
        <position position="91"/>
    </location>
    <ligand>
        <name>Mg(2+)</name>
        <dbReference type="ChEBI" id="CHEBI:18420"/>
    </ligand>
</feature>
<feature type="binding site" evidence="1">
    <location>
        <begin position="139"/>
        <end position="141"/>
    </location>
    <ligand>
        <name>ATP</name>
        <dbReference type="ChEBI" id="CHEBI:30616"/>
        <note>ligand shared between dimeric partners</note>
    </ligand>
</feature>
<feature type="binding site" evidence="1">
    <location>
        <position position="229"/>
    </location>
    <ligand>
        <name>Mg(2+)</name>
        <dbReference type="ChEBI" id="CHEBI:18420"/>
    </ligand>
</feature>
<feature type="site" description="Important for catalytic activity" evidence="1">
    <location>
        <position position="20"/>
    </location>
</feature>
<reference key="1">
    <citation type="journal article" date="2004" name="Science">
        <title>A predator unmasked: life cycle of Bdellovibrio bacteriovorus from a genomic perspective.</title>
        <authorList>
            <person name="Rendulic S."/>
            <person name="Jagtap P."/>
            <person name="Rosinus A."/>
            <person name="Eppinger M."/>
            <person name="Baar C."/>
            <person name="Lanz C."/>
            <person name="Keller H."/>
            <person name="Lambert C."/>
            <person name="Evans K.J."/>
            <person name="Goesmann A."/>
            <person name="Meyer F."/>
            <person name="Sockett R.E."/>
            <person name="Schuster S.C."/>
        </authorList>
    </citation>
    <scope>NUCLEOTIDE SEQUENCE [LARGE SCALE GENOMIC DNA]</scope>
    <source>
        <strain>ATCC 15356 / DSM 50701 / NCIMB 9529 / HD100</strain>
    </source>
</reference>
<comment type="function">
    <text evidence="1">Synthesizes selenophosphate from selenide and ATP.</text>
</comment>
<comment type="catalytic activity">
    <reaction evidence="1">
        <text>hydrogenselenide + ATP + H2O = selenophosphate + AMP + phosphate + 2 H(+)</text>
        <dbReference type="Rhea" id="RHEA:18737"/>
        <dbReference type="ChEBI" id="CHEBI:15377"/>
        <dbReference type="ChEBI" id="CHEBI:15378"/>
        <dbReference type="ChEBI" id="CHEBI:16144"/>
        <dbReference type="ChEBI" id="CHEBI:29317"/>
        <dbReference type="ChEBI" id="CHEBI:30616"/>
        <dbReference type="ChEBI" id="CHEBI:43474"/>
        <dbReference type="ChEBI" id="CHEBI:456215"/>
        <dbReference type="EC" id="2.7.9.3"/>
    </reaction>
</comment>
<comment type="cofactor">
    <cofactor evidence="1">
        <name>Mg(2+)</name>
        <dbReference type="ChEBI" id="CHEBI:18420"/>
    </cofactor>
    <text evidence="1">Binds 1 Mg(2+) ion per monomer.</text>
</comment>
<comment type="subunit">
    <text evidence="1">Homodimer.</text>
</comment>
<comment type="similarity">
    <text evidence="1">Belongs to the selenophosphate synthase 1 family. Class I subfamily.</text>
</comment>
<organism>
    <name type="scientific">Bdellovibrio bacteriovorus (strain ATCC 15356 / DSM 50701 / NCIMB 9529 / HD100)</name>
    <dbReference type="NCBI Taxonomy" id="264462"/>
    <lineage>
        <taxon>Bacteria</taxon>
        <taxon>Pseudomonadati</taxon>
        <taxon>Bdellovibrionota</taxon>
        <taxon>Bdellovibrionia</taxon>
        <taxon>Bdellovibrionales</taxon>
        <taxon>Pseudobdellovibrionaceae</taxon>
        <taxon>Bdellovibrio</taxon>
    </lineage>
</organism>
<protein>
    <recommendedName>
        <fullName evidence="1">Selenide, water dikinase</fullName>
        <ecNumber evidence="1">2.7.9.3</ecNumber>
    </recommendedName>
    <alternativeName>
        <fullName evidence="1">Selenium donor protein</fullName>
    </alternativeName>
    <alternativeName>
        <fullName evidence="1">Selenophosphate synthase</fullName>
    </alternativeName>
</protein>
<evidence type="ECO:0000255" key="1">
    <source>
        <dbReference type="HAMAP-Rule" id="MF_00625"/>
    </source>
</evidence>
<keyword id="KW-0067">ATP-binding</keyword>
<keyword id="KW-0418">Kinase</keyword>
<keyword id="KW-0460">Magnesium</keyword>
<keyword id="KW-0479">Metal-binding</keyword>
<keyword id="KW-0547">Nucleotide-binding</keyword>
<keyword id="KW-1185">Reference proteome</keyword>
<keyword id="KW-0711">Selenium</keyword>
<keyword id="KW-0808">Transferase</keyword>
<name>SELD_BDEBA</name>
<proteinExistence type="inferred from homology"/>